<proteinExistence type="evidence at protein level"/>
<accession>Q9UZL4</accession>
<accession>G8ZKA4</accession>
<feature type="chain" id="PRO_0000122274" description="Small ribosomal subunit protein eS8">
    <location>
        <begin position="1"/>
        <end position="127"/>
    </location>
</feature>
<feature type="helix" evidence="6">
    <location>
        <begin position="25"/>
        <end position="27"/>
    </location>
</feature>
<feature type="strand" evidence="5">
    <location>
        <begin position="35"/>
        <end position="37"/>
    </location>
</feature>
<feature type="strand" evidence="6">
    <location>
        <begin position="42"/>
        <end position="48"/>
    </location>
</feature>
<feature type="turn" evidence="6">
    <location>
        <begin position="49"/>
        <end position="51"/>
    </location>
</feature>
<feature type="strand" evidence="6">
    <location>
        <begin position="52"/>
        <end position="60"/>
    </location>
</feature>
<feature type="strand" evidence="6">
    <location>
        <begin position="62"/>
        <end position="66"/>
    </location>
</feature>
<feature type="strand" evidence="4">
    <location>
        <begin position="68"/>
        <end position="70"/>
    </location>
</feature>
<feature type="strand" evidence="6">
    <location>
        <begin position="72"/>
        <end position="82"/>
    </location>
</feature>
<feature type="strand" evidence="3">
    <location>
        <begin position="84"/>
        <end position="86"/>
    </location>
</feature>
<feature type="helix" evidence="6">
    <location>
        <begin position="89"/>
        <end position="92"/>
    </location>
</feature>
<feature type="strand" evidence="6">
    <location>
        <begin position="100"/>
        <end position="103"/>
    </location>
</feature>
<feature type="strand" evidence="6">
    <location>
        <begin position="106"/>
        <end position="110"/>
    </location>
</feature>
<feature type="helix" evidence="6">
    <location>
        <begin position="114"/>
        <end position="117"/>
    </location>
</feature>
<feature type="strand" evidence="6">
    <location>
        <begin position="121"/>
        <end position="124"/>
    </location>
</feature>
<gene>
    <name type="primary">rps8e</name>
    <name type="ordered locus">PYRAB11320</name>
    <name type="ORF">PAB0749</name>
</gene>
<comment type="subunit">
    <text evidence="1">Part of the 30S ribosomal subunit.</text>
</comment>
<comment type="similarity">
    <text evidence="2">Belongs to the eukaryotic ribosomal protein eS8 family.</text>
</comment>
<organism>
    <name type="scientific">Pyrococcus abyssi (strain GE5 / Orsay)</name>
    <dbReference type="NCBI Taxonomy" id="272844"/>
    <lineage>
        <taxon>Archaea</taxon>
        <taxon>Methanobacteriati</taxon>
        <taxon>Methanobacteriota</taxon>
        <taxon>Thermococci</taxon>
        <taxon>Thermococcales</taxon>
        <taxon>Thermococcaceae</taxon>
        <taxon>Pyrococcus</taxon>
    </lineage>
</organism>
<name>RS8E_PYRAB</name>
<reference key="1">
    <citation type="journal article" date="2003" name="Mol. Microbiol.">
        <title>An integrated analysis of the genome of the hyperthermophilic archaeon Pyrococcus abyssi.</title>
        <authorList>
            <person name="Cohen G.N."/>
            <person name="Barbe V."/>
            <person name="Flament D."/>
            <person name="Galperin M."/>
            <person name="Heilig R."/>
            <person name="Lecompte O."/>
            <person name="Poch O."/>
            <person name="Prieur D."/>
            <person name="Querellou J."/>
            <person name="Ripp R."/>
            <person name="Thierry J.-C."/>
            <person name="Van der Oost J."/>
            <person name="Weissenbach J."/>
            <person name="Zivanovic Y."/>
            <person name="Forterre P."/>
        </authorList>
    </citation>
    <scope>NUCLEOTIDE SEQUENCE [LARGE SCALE GENOMIC DNA]</scope>
    <source>
        <strain>GE5 / Orsay</strain>
    </source>
</reference>
<reference key="2">
    <citation type="journal article" date="2012" name="Curr. Microbiol.">
        <title>Re-annotation of two hyperthermophilic archaea Pyrococcus abyssi GE5 and Pyrococcus furiosus DSM 3638.</title>
        <authorList>
            <person name="Gao J."/>
            <person name="Wang J."/>
        </authorList>
    </citation>
    <scope>GENOME REANNOTATION</scope>
    <source>
        <strain>GE5 / Orsay</strain>
    </source>
</reference>
<evidence type="ECO:0000250" key="1"/>
<evidence type="ECO:0000305" key="2"/>
<evidence type="ECO:0007829" key="3">
    <source>
        <dbReference type="PDB" id="6SWC"/>
    </source>
</evidence>
<evidence type="ECO:0007829" key="4">
    <source>
        <dbReference type="PDB" id="6SWD"/>
    </source>
</evidence>
<evidence type="ECO:0007829" key="5">
    <source>
        <dbReference type="PDB" id="7ZAI"/>
    </source>
</evidence>
<evidence type="ECO:0007829" key="6">
    <source>
        <dbReference type="PDB" id="7ZHG"/>
    </source>
</evidence>
<protein>
    <recommendedName>
        <fullName evidence="2">Small ribosomal subunit protein eS8</fullName>
    </recommendedName>
    <alternativeName>
        <fullName>30S ribosomal protein S8e</fullName>
    </alternativeName>
</protein>
<dbReference type="EMBL" id="AJ248286">
    <property type="protein sequence ID" value="CAB50043.1"/>
    <property type="molecule type" value="Genomic_DNA"/>
</dbReference>
<dbReference type="EMBL" id="HE613800">
    <property type="protein sequence ID" value="CCE70547.1"/>
    <property type="molecule type" value="Genomic_DNA"/>
</dbReference>
<dbReference type="PIR" id="F75092">
    <property type="entry name" value="F75092"/>
</dbReference>
<dbReference type="RefSeq" id="WP_010868249.1">
    <property type="nucleotide sequence ID" value="NC_000868.1"/>
</dbReference>
<dbReference type="PDB" id="6SW9">
    <property type="method" value="EM"/>
    <property type="resolution" value="4.20 A"/>
    <property type="chains" value="J=1-127"/>
</dbReference>
<dbReference type="PDB" id="6SWC">
    <property type="method" value="EM"/>
    <property type="resolution" value="3.30 A"/>
    <property type="chains" value="J=1-127"/>
</dbReference>
<dbReference type="PDB" id="6SWD">
    <property type="method" value="EM"/>
    <property type="resolution" value="3.20 A"/>
    <property type="chains" value="J=1-127"/>
</dbReference>
<dbReference type="PDB" id="7ZAG">
    <property type="method" value="EM"/>
    <property type="resolution" value="2.77 A"/>
    <property type="chains" value="J=1-127"/>
</dbReference>
<dbReference type="PDB" id="7ZAH">
    <property type="method" value="EM"/>
    <property type="resolution" value="2.70 A"/>
    <property type="chains" value="J=1-127"/>
</dbReference>
<dbReference type="PDB" id="7ZAI">
    <property type="method" value="EM"/>
    <property type="resolution" value="2.60 A"/>
    <property type="chains" value="J=1-127"/>
</dbReference>
<dbReference type="PDB" id="7ZHG">
    <property type="method" value="EM"/>
    <property type="resolution" value="2.25 A"/>
    <property type="chains" value="J=1-127"/>
</dbReference>
<dbReference type="PDBsum" id="6SW9"/>
<dbReference type="PDBsum" id="6SWC"/>
<dbReference type="PDBsum" id="6SWD"/>
<dbReference type="PDBsum" id="7ZAG"/>
<dbReference type="PDBsum" id="7ZAH"/>
<dbReference type="PDBsum" id="7ZAI"/>
<dbReference type="PDBsum" id="7ZHG"/>
<dbReference type="EMDB" id="EMD-10320"/>
<dbReference type="EMDB" id="EMD-10322"/>
<dbReference type="EMDB" id="EMD-10323"/>
<dbReference type="EMDB" id="EMD-14579"/>
<dbReference type="EMDB" id="EMD-14580"/>
<dbReference type="EMDB" id="EMD-14581"/>
<dbReference type="EMDB" id="EMD-14731"/>
<dbReference type="EMDB" id="EMD-8148"/>
<dbReference type="SMR" id="Q9UZL4"/>
<dbReference type="STRING" id="272844.PAB0749"/>
<dbReference type="KEGG" id="pab:PAB0749"/>
<dbReference type="PATRIC" id="fig|272844.11.peg.1189"/>
<dbReference type="eggNOG" id="arCOG04154">
    <property type="taxonomic scope" value="Archaea"/>
</dbReference>
<dbReference type="HOGENOM" id="CLU_080597_2_1_2"/>
<dbReference type="OrthoDB" id="372305at2157"/>
<dbReference type="PhylomeDB" id="Q9UZL4"/>
<dbReference type="Proteomes" id="UP000000810">
    <property type="component" value="Chromosome"/>
</dbReference>
<dbReference type="Proteomes" id="UP000009139">
    <property type="component" value="Chromosome"/>
</dbReference>
<dbReference type="GO" id="GO:1990904">
    <property type="term" value="C:ribonucleoprotein complex"/>
    <property type="evidence" value="ECO:0007669"/>
    <property type="project" value="UniProtKB-KW"/>
</dbReference>
<dbReference type="GO" id="GO:0005840">
    <property type="term" value="C:ribosome"/>
    <property type="evidence" value="ECO:0007669"/>
    <property type="project" value="UniProtKB-KW"/>
</dbReference>
<dbReference type="GO" id="GO:0003735">
    <property type="term" value="F:structural constituent of ribosome"/>
    <property type="evidence" value="ECO:0007669"/>
    <property type="project" value="InterPro"/>
</dbReference>
<dbReference type="GO" id="GO:0006412">
    <property type="term" value="P:translation"/>
    <property type="evidence" value="ECO:0007669"/>
    <property type="project" value="UniProtKB-UniRule"/>
</dbReference>
<dbReference type="CDD" id="cd11382">
    <property type="entry name" value="Ribosomal_S8e"/>
    <property type="match status" value="1"/>
</dbReference>
<dbReference type="FunFam" id="2.40.10.310:FF:000002">
    <property type="entry name" value="30S ribosomal protein S8e"/>
    <property type="match status" value="1"/>
</dbReference>
<dbReference type="Gene3D" id="2.40.10.310">
    <property type="match status" value="1"/>
</dbReference>
<dbReference type="HAMAP" id="MF_00029">
    <property type="entry name" value="Ribosomal_eS8"/>
    <property type="match status" value="1"/>
</dbReference>
<dbReference type="InterPro" id="IPR001047">
    <property type="entry name" value="Ribosomal_eS8"/>
</dbReference>
<dbReference type="InterPro" id="IPR018283">
    <property type="entry name" value="Ribosomal_eS8_CS"/>
</dbReference>
<dbReference type="InterPro" id="IPR020919">
    <property type="entry name" value="Ribosomal_protein_eS8_arc"/>
</dbReference>
<dbReference type="InterPro" id="IPR022309">
    <property type="entry name" value="Ribosomal_Se8/biogenesis_NSA2"/>
</dbReference>
<dbReference type="NCBIfam" id="TIGR00307">
    <property type="entry name" value="eS8"/>
    <property type="match status" value="1"/>
</dbReference>
<dbReference type="PANTHER" id="PTHR10394">
    <property type="entry name" value="40S RIBOSOMAL PROTEIN S8"/>
    <property type="match status" value="1"/>
</dbReference>
<dbReference type="Pfam" id="PF01201">
    <property type="entry name" value="Ribosomal_S8e"/>
    <property type="match status" value="1"/>
</dbReference>
<dbReference type="PROSITE" id="PS01193">
    <property type="entry name" value="RIBOSOMAL_S8E"/>
    <property type="match status" value="1"/>
</dbReference>
<keyword id="KW-0002">3D-structure</keyword>
<keyword id="KW-0687">Ribonucleoprotein</keyword>
<keyword id="KW-0689">Ribosomal protein</keyword>
<sequence length="127" mass="14262">MAIWQGRSLRKPSGGRIVLARKKRKRELGREPSNTRVAEQDKRKIIRTYGGNKKVRLTAAAYANVFDKSGKGRKVRIIRVIENPANRQFARRNIITKGAIIETEIGKAKVTSRPGQDGVVNAILLEE</sequence>